<accession>B2T419</accession>
<reference key="1">
    <citation type="journal article" date="2011" name="J. Bacteriol.">
        <title>Complete genome sequence of the plant growth-promoting endophyte Burkholderia phytofirmans strain PsJN.</title>
        <authorList>
            <person name="Weilharter A."/>
            <person name="Mitter B."/>
            <person name="Shin M.V."/>
            <person name="Chain P.S."/>
            <person name="Nowak J."/>
            <person name="Sessitsch A."/>
        </authorList>
    </citation>
    <scope>NUCLEOTIDE SEQUENCE [LARGE SCALE GENOMIC DNA]</scope>
    <source>
        <strain>DSM 17436 / LMG 22146 / PsJN</strain>
    </source>
</reference>
<sequence>MKFLFDLFPIILFFVAFKIWGIFTATAVAIVATLVQIAWVAFRHRKVDPMLWVSLGVVTVFGGATLVLHNDTFIKWKPTVLYWAFSVALIVSQLAFNKNLIEAMMGKQITLPHAIWGKLSVVWAIFFVLLGLVNLFVAYNYTTDQWVNFKLFGATGCLVVFIVGQSLWLSKYMKEE</sequence>
<gene>
    <name evidence="1" type="primary">yciB</name>
    <name type="ordered locus">Bphyt_1922</name>
</gene>
<feature type="chain" id="PRO_1000098875" description="Inner membrane-spanning protein YciB">
    <location>
        <begin position="1"/>
        <end position="176"/>
    </location>
</feature>
<feature type="transmembrane region" description="Helical" evidence="1">
    <location>
        <begin position="24"/>
        <end position="44"/>
    </location>
</feature>
<feature type="transmembrane region" description="Helical" evidence="1">
    <location>
        <begin position="49"/>
        <end position="69"/>
    </location>
</feature>
<feature type="transmembrane region" description="Helical" evidence="1">
    <location>
        <begin position="76"/>
        <end position="96"/>
    </location>
</feature>
<feature type="transmembrane region" description="Helical" evidence="1">
    <location>
        <begin position="119"/>
        <end position="139"/>
    </location>
</feature>
<feature type="transmembrane region" description="Helical" evidence="1">
    <location>
        <begin position="149"/>
        <end position="169"/>
    </location>
</feature>
<organism>
    <name type="scientific">Paraburkholderia phytofirmans (strain DSM 17436 / LMG 22146 / PsJN)</name>
    <name type="common">Burkholderia phytofirmans</name>
    <dbReference type="NCBI Taxonomy" id="398527"/>
    <lineage>
        <taxon>Bacteria</taxon>
        <taxon>Pseudomonadati</taxon>
        <taxon>Pseudomonadota</taxon>
        <taxon>Betaproteobacteria</taxon>
        <taxon>Burkholderiales</taxon>
        <taxon>Burkholderiaceae</taxon>
        <taxon>Paraburkholderia</taxon>
    </lineage>
</organism>
<evidence type="ECO:0000255" key="1">
    <source>
        <dbReference type="HAMAP-Rule" id="MF_00189"/>
    </source>
</evidence>
<proteinExistence type="inferred from homology"/>
<name>YCIB_PARPJ</name>
<keyword id="KW-0997">Cell inner membrane</keyword>
<keyword id="KW-1003">Cell membrane</keyword>
<keyword id="KW-0472">Membrane</keyword>
<keyword id="KW-0812">Transmembrane</keyword>
<keyword id="KW-1133">Transmembrane helix</keyword>
<protein>
    <recommendedName>
        <fullName evidence="1">Inner membrane-spanning protein YciB</fullName>
    </recommendedName>
</protein>
<dbReference type="EMBL" id="CP001052">
    <property type="protein sequence ID" value="ACD16330.1"/>
    <property type="molecule type" value="Genomic_DNA"/>
</dbReference>
<dbReference type="RefSeq" id="WP_012432930.1">
    <property type="nucleotide sequence ID" value="NC_010681.1"/>
</dbReference>
<dbReference type="STRING" id="398527.Bphyt_1922"/>
<dbReference type="KEGG" id="bpy:Bphyt_1922"/>
<dbReference type="eggNOG" id="COG2917">
    <property type="taxonomic scope" value="Bacteria"/>
</dbReference>
<dbReference type="HOGENOM" id="CLU_089554_2_0_4"/>
<dbReference type="OrthoDB" id="9788219at2"/>
<dbReference type="Proteomes" id="UP000001739">
    <property type="component" value="Chromosome 1"/>
</dbReference>
<dbReference type="GO" id="GO:0005886">
    <property type="term" value="C:plasma membrane"/>
    <property type="evidence" value="ECO:0007669"/>
    <property type="project" value="UniProtKB-SubCell"/>
</dbReference>
<dbReference type="HAMAP" id="MF_00189">
    <property type="entry name" value="YciB"/>
    <property type="match status" value="1"/>
</dbReference>
<dbReference type="InterPro" id="IPR006008">
    <property type="entry name" value="YciB"/>
</dbReference>
<dbReference type="NCBIfam" id="TIGR00997">
    <property type="entry name" value="ispZ"/>
    <property type="match status" value="1"/>
</dbReference>
<dbReference type="NCBIfam" id="NF001325">
    <property type="entry name" value="PRK00259.1-3"/>
    <property type="match status" value="1"/>
</dbReference>
<dbReference type="PANTHER" id="PTHR36917:SF1">
    <property type="entry name" value="INNER MEMBRANE-SPANNING PROTEIN YCIB"/>
    <property type="match status" value="1"/>
</dbReference>
<dbReference type="PANTHER" id="PTHR36917">
    <property type="entry name" value="INTRACELLULAR SEPTATION PROTEIN A-RELATED"/>
    <property type="match status" value="1"/>
</dbReference>
<dbReference type="Pfam" id="PF04279">
    <property type="entry name" value="IspA"/>
    <property type="match status" value="1"/>
</dbReference>
<comment type="function">
    <text evidence="1">Plays a role in cell envelope biogenesis, maintenance of cell envelope integrity and membrane homeostasis.</text>
</comment>
<comment type="subcellular location">
    <subcellularLocation>
        <location evidence="1">Cell inner membrane</location>
        <topology evidence="1">Multi-pass membrane protein</topology>
    </subcellularLocation>
</comment>
<comment type="similarity">
    <text evidence="1">Belongs to the YciB family.</text>
</comment>